<feature type="chain" id="PRO_0000354675" description="Mitochondrial import inner membrane translocase subunit Tim23">
    <location>
        <begin position="1"/>
        <end position="209"/>
    </location>
</feature>
<feature type="transmembrane region" description="Helical" evidence="2">
    <location>
        <begin position="73"/>
        <end position="93"/>
    </location>
</feature>
<feature type="transmembrane region" description="Helical" evidence="2">
    <location>
        <begin position="125"/>
        <end position="145"/>
    </location>
</feature>
<feature type="transmembrane region" description="Helical" evidence="2">
    <location>
        <begin position="172"/>
        <end position="194"/>
    </location>
</feature>
<accession>Q5RDD0</accession>
<proteinExistence type="evidence at transcript level"/>
<gene>
    <name type="primary">TIMM23</name>
    <name type="synonym">TIM23</name>
</gene>
<sequence length="209" mass="21985">MEGGGGSGNKTTGGLAGFFGAGGAGYSHADLAGVPLTGMNPLSPYLNVDPRYLVQDTDEFILPTGANKTRGRFELAFFTIGGCCMTVAAFGAMNGLRLGLKETQNMAWSKPRNVQILNMVTRQGALWANTLGSLALLYSAFGVIIEKTRGAEDDLNTVAAGTMTGMLYKCTGGLRGIARGGLTGLTLTSLYALYNNWEHMKGSLLQQSL</sequence>
<evidence type="ECO:0000250" key="1">
    <source>
        <dbReference type="UniProtKB" id="O14925"/>
    </source>
</evidence>
<evidence type="ECO:0000255" key="2"/>
<evidence type="ECO:0000305" key="3"/>
<keyword id="KW-0472">Membrane</keyword>
<keyword id="KW-0496">Mitochondrion</keyword>
<keyword id="KW-0999">Mitochondrion inner membrane</keyword>
<keyword id="KW-0653">Protein transport</keyword>
<keyword id="KW-1185">Reference proteome</keyword>
<keyword id="KW-0811">Translocation</keyword>
<keyword id="KW-0812">Transmembrane</keyword>
<keyword id="KW-1133">Transmembrane helix</keyword>
<keyword id="KW-0813">Transport</keyword>
<name>TIM23_PONAB</name>
<reference key="1">
    <citation type="submission" date="2004-11" db="EMBL/GenBank/DDBJ databases">
        <authorList>
            <consortium name="The German cDNA consortium"/>
        </authorList>
    </citation>
    <scope>NUCLEOTIDE SEQUENCE [LARGE SCALE MRNA]</scope>
    <source>
        <tissue>Kidney</tissue>
    </source>
</reference>
<dbReference type="EMBL" id="CR857984">
    <property type="protein sequence ID" value="CAH90227.1"/>
    <property type="molecule type" value="mRNA"/>
</dbReference>
<dbReference type="SMR" id="Q5RDD0"/>
<dbReference type="FunCoup" id="Q5RDD0">
    <property type="interactions" value="1844"/>
</dbReference>
<dbReference type="STRING" id="9601.ENSPPYP00000002637"/>
<dbReference type="eggNOG" id="KOG3324">
    <property type="taxonomic scope" value="Eukaryota"/>
</dbReference>
<dbReference type="InParanoid" id="Q5RDD0"/>
<dbReference type="Proteomes" id="UP000001595">
    <property type="component" value="Unplaced"/>
</dbReference>
<dbReference type="GO" id="GO:0005744">
    <property type="term" value="C:TIM23 mitochondrial import inner membrane translocase complex"/>
    <property type="evidence" value="ECO:0007669"/>
    <property type="project" value="InterPro"/>
</dbReference>
<dbReference type="GO" id="GO:0008320">
    <property type="term" value="F:protein transmembrane transporter activity"/>
    <property type="evidence" value="ECO:0007669"/>
    <property type="project" value="InterPro"/>
</dbReference>
<dbReference type="GO" id="GO:0030150">
    <property type="term" value="P:protein import into mitochondrial matrix"/>
    <property type="evidence" value="ECO:0007669"/>
    <property type="project" value="InterPro"/>
</dbReference>
<dbReference type="GO" id="GO:0061734">
    <property type="term" value="P:type 2 mitophagy"/>
    <property type="evidence" value="ECO:0000250"/>
    <property type="project" value="UniProtKB"/>
</dbReference>
<dbReference type="InterPro" id="IPR005681">
    <property type="entry name" value="Tim23"/>
</dbReference>
<dbReference type="InterPro" id="IPR045238">
    <property type="entry name" value="Tim23-like"/>
</dbReference>
<dbReference type="NCBIfam" id="TIGR00983">
    <property type="entry name" value="3a0801s02tim23"/>
    <property type="match status" value="1"/>
</dbReference>
<dbReference type="PANTHER" id="PTHR15371:SF39">
    <property type="entry name" value="MITOCHONDRIAL IMPORT INNER MEMBRANE TRANSLOCASE SUBUNIT TIM23"/>
    <property type="match status" value="1"/>
</dbReference>
<dbReference type="PANTHER" id="PTHR15371">
    <property type="entry name" value="TIM23"/>
    <property type="match status" value="1"/>
</dbReference>
<dbReference type="Pfam" id="PF02466">
    <property type="entry name" value="Tim17"/>
    <property type="match status" value="1"/>
</dbReference>
<organism>
    <name type="scientific">Pongo abelii</name>
    <name type="common">Sumatran orangutan</name>
    <name type="synonym">Pongo pygmaeus abelii</name>
    <dbReference type="NCBI Taxonomy" id="9601"/>
    <lineage>
        <taxon>Eukaryota</taxon>
        <taxon>Metazoa</taxon>
        <taxon>Chordata</taxon>
        <taxon>Craniata</taxon>
        <taxon>Vertebrata</taxon>
        <taxon>Euteleostomi</taxon>
        <taxon>Mammalia</taxon>
        <taxon>Eutheria</taxon>
        <taxon>Euarchontoglires</taxon>
        <taxon>Primates</taxon>
        <taxon>Haplorrhini</taxon>
        <taxon>Catarrhini</taxon>
        <taxon>Hominidae</taxon>
        <taxon>Pongo</taxon>
    </lineage>
</organism>
<comment type="function">
    <text evidence="1">Essential component of the TIM23 complex, a complex that mediates the translocation of transit peptide-containing proteins across the mitochondrial inner membrane. Has a role in the activation of stress-induced mitophagy by protecting PINK1 from OMA1-mediated degradation and facilitating its accumulation at the outer mitochondrial membrane in response to depolarization.</text>
</comment>
<comment type="subunit">
    <text evidence="1">Component of the TIM23 complex at least composed of TIMM23, TIMM17 (TIMM17A or TIMM17B) and TIMM50; within this complex, directly interacts with TIMM50. The complex interacts with the TIMM44 component of the PAM complex and with DNAJC15. Upon mitochondrial depolarization, interacts with PINK1; the interaction is required for PINK1 accumulation at the outer mitochondrial membrane, kinase activation by autophosphorylation and PRKN recruitement to mitochondria.</text>
</comment>
<comment type="subcellular location">
    <subcellularLocation>
        <location evidence="1">Mitochondrion inner membrane</location>
        <topology evidence="2">Multi-pass membrane protein</topology>
    </subcellularLocation>
</comment>
<comment type="similarity">
    <text evidence="3">Belongs to the Tim17/Tim22/Tim23 family.</text>
</comment>
<protein>
    <recommendedName>
        <fullName>Mitochondrial import inner membrane translocase subunit Tim23</fullName>
    </recommendedName>
</protein>